<proteinExistence type="inferred from homology"/>
<gene>
    <name evidence="1" type="primary">rpmH</name>
    <name type="ordered locus">BceJ2315_04220</name>
    <name type="ORF">BCAL0423a</name>
</gene>
<protein>
    <recommendedName>
        <fullName evidence="1">Large ribosomal subunit protein bL34</fullName>
    </recommendedName>
    <alternativeName>
        <fullName evidence="2">50S ribosomal protein L34</fullName>
    </alternativeName>
</protein>
<organism>
    <name type="scientific">Burkholderia cenocepacia (strain ATCC BAA-245 / DSM 16553 / LMG 16656 / NCTC 13227 / J2315 / CF5610)</name>
    <name type="common">Burkholderia cepacia (strain J2315)</name>
    <dbReference type="NCBI Taxonomy" id="216591"/>
    <lineage>
        <taxon>Bacteria</taxon>
        <taxon>Pseudomonadati</taxon>
        <taxon>Pseudomonadota</taxon>
        <taxon>Betaproteobacteria</taxon>
        <taxon>Burkholderiales</taxon>
        <taxon>Burkholderiaceae</taxon>
        <taxon>Burkholderia</taxon>
        <taxon>Burkholderia cepacia complex</taxon>
    </lineage>
</organism>
<keyword id="KW-0687">Ribonucleoprotein</keyword>
<keyword id="KW-0689">Ribosomal protein</keyword>
<dbReference type="EMBL" id="AM747720">
    <property type="protein sequence ID" value="CAR50735.1"/>
    <property type="molecule type" value="Genomic_DNA"/>
</dbReference>
<dbReference type="RefSeq" id="WP_004198824.1">
    <property type="nucleotide sequence ID" value="NC_011000.1"/>
</dbReference>
<dbReference type="SMR" id="B4E7D2"/>
<dbReference type="GeneID" id="98107775"/>
<dbReference type="KEGG" id="bcj:BCAL0423a"/>
<dbReference type="eggNOG" id="COG0230">
    <property type="taxonomic scope" value="Bacteria"/>
</dbReference>
<dbReference type="HOGENOM" id="CLU_129938_2_0_4"/>
<dbReference type="BioCyc" id="BCEN216591:G1G1V-489-MONOMER"/>
<dbReference type="Proteomes" id="UP000001035">
    <property type="component" value="Chromosome 1"/>
</dbReference>
<dbReference type="GO" id="GO:1990904">
    <property type="term" value="C:ribonucleoprotein complex"/>
    <property type="evidence" value="ECO:0007669"/>
    <property type="project" value="UniProtKB-KW"/>
</dbReference>
<dbReference type="GO" id="GO:0005840">
    <property type="term" value="C:ribosome"/>
    <property type="evidence" value="ECO:0007669"/>
    <property type="project" value="UniProtKB-KW"/>
</dbReference>
<dbReference type="GO" id="GO:0003735">
    <property type="term" value="F:structural constituent of ribosome"/>
    <property type="evidence" value="ECO:0007669"/>
    <property type="project" value="InterPro"/>
</dbReference>
<dbReference type="GO" id="GO:0006412">
    <property type="term" value="P:translation"/>
    <property type="evidence" value="ECO:0007669"/>
    <property type="project" value="UniProtKB-UniRule"/>
</dbReference>
<dbReference type="FunFam" id="1.10.287.3980:FF:000001">
    <property type="entry name" value="Mitochondrial ribosomal protein L34"/>
    <property type="match status" value="1"/>
</dbReference>
<dbReference type="Gene3D" id="1.10.287.3980">
    <property type="match status" value="1"/>
</dbReference>
<dbReference type="HAMAP" id="MF_00391">
    <property type="entry name" value="Ribosomal_bL34"/>
    <property type="match status" value="1"/>
</dbReference>
<dbReference type="InterPro" id="IPR000271">
    <property type="entry name" value="Ribosomal_bL34"/>
</dbReference>
<dbReference type="InterPro" id="IPR020939">
    <property type="entry name" value="Ribosomal_bL34_CS"/>
</dbReference>
<dbReference type="NCBIfam" id="TIGR01030">
    <property type="entry name" value="rpmH_bact"/>
    <property type="match status" value="1"/>
</dbReference>
<dbReference type="PANTHER" id="PTHR14503:SF4">
    <property type="entry name" value="LARGE RIBOSOMAL SUBUNIT PROTEIN BL34M"/>
    <property type="match status" value="1"/>
</dbReference>
<dbReference type="PANTHER" id="PTHR14503">
    <property type="entry name" value="MITOCHONDRIAL RIBOSOMAL PROTEIN 34 FAMILY MEMBER"/>
    <property type="match status" value="1"/>
</dbReference>
<dbReference type="Pfam" id="PF00468">
    <property type="entry name" value="Ribosomal_L34"/>
    <property type="match status" value="1"/>
</dbReference>
<dbReference type="PROSITE" id="PS00784">
    <property type="entry name" value="RIBOSOMAL_L34"/>
    <property type="match status" value="1"/>
</dbReference>
<reference key="1">
    <citation type="journal article" date="2009" name="J. Bacteriol.">
        <title>The genome of Burkholderia cenocepacia J2315, an epidemic pathogen of cystic fibrosis patients.</title>
        <authorList>
            <person name="Holden M.T."/>
            <person name="Seth-Smith H.M."/>
            <person name="Crossman L.C."/>
            <person name="Sebaihia M."/>
            <person name="Bentley S.D."/>
            <person name="Cerdeno-Tarraga A.M."/>
            <person name="Thomson N.R."/>
            <person name="Bason N."/>
            <person name="Quail M.A."/>
            <person name="Sharp S."/>
            <person name="Cherevach I."/>
            <person name="Churcher C."/>
            <person name="Goodhead I."/>
            <person name="Hauser H."/>
            <person name="Holroyd N."/>
            <person name="Mungall K."/>
            <person name="Scott P."/>
            <person name="Walker D."/>
            <person name="White B."/>
            <person name="Rose H."/>
            <person name="Iversen P."/>
            <person name="Mil-Homens D."/>
            <person name="Rocha E.P."/>
            <person name="Fialho A.M."/>
            <person name="Baldwin A."/>
            <person name="Dowson C."/>
            <person name="Barrell B.G."/>
            <person name="Govan J.R."/>
            <person name="Vandamme P."/>
            <person name="Hart C.A."/>
            <person name="Mahenthiralingam E."/>
            <person name="Parkhill J."/>
        </authorList>
    </citation>
    <scope>NUCLEOTIDE SEQUENCE [LARGE SCALE GENOMIC DNA]</scope>
    <source>
        <strain>ATCC BAA-245 / DSM 16553 / LMG 16656 / NCTC 13227 / J2315 / CF5610</strain>
    </source>
</reference>
<comment type="similarity">
    <text evidence="1">Belongs to the bacterial ribosomal protein bL34 family.</text>
</comment>
<evidence type="ECO:0000255" key="1">
    <source>
        <dbReference type="HAMAP-Rule" id="MF_00391"/>
    </source>
</evidence>
<evidence type="ECO:0000305" key="2"/>
<name>RL34_BURCJ</name>
<sequence length="44" mass="5195">MKRTYQPSVTRRKRTHGFRVRMKTAGGRKVINARRAKGRKRLAI</sequence>
<feature type="chain" id="PRO_1000196014" description="Large ribosomal subunit protein bL34">
    <location>
        <begin position="1"/>
        <end position="44"/>
    </location>
</feature>
<accession>B4E7D2</accession>